<gene>
    <name evidence="1" type="primary">rpmD</name>
    <name type="ordered locus">Rpal_3649</name>
</gene>
<name>RL30_RHOPT</name>
<evidence type="ECO:0000255" key="1">
    <source>
        <dbReference type="HAMAP-Rule" id="MF_01371"/>
    </source>
</evidence>
<evidence type="ECO:0000305" key="2"/>
<accession>B3QBW2</accession>
<comment type="subunit">
    <text evidence="1">Part of the 50S ribosomal subunit.</text>
</comment>
<comment type="similarity">
    <text evidence="1">Belongs to the universal ribosomal protein uL30 family.</text>
</comment>
<proteinExistence type="inferred from homology"/>
<organism>
    <name type="scientific">Rhodopseudomonas palustris (strain TIE-1)</name>
    <dbReference type="NCBI Taxonomy" id="395960"/>
    <lineage>
        <taxon>Bacteria</taxon>
        <taxon>Pseudomonadati</taxon>
        <taxon>Pseudomonadota</taxon>
        <taxon>Alphaproteobacteria</taxon>
        <taxon>Hyphomicrobiales</taxon>
        <taxon>Nitrobacteraceae</taxon>
        <taxon>Rhodopseudomonas</taxon>
    </lineage>
</organism>
<feature type="chain" id="PRO_1000144709" description="Large ribosomal subunit protein uL30">
    <location>
        <begin position="1"/>
        <end position="64"/>
    </location>
</feature>
<sequence>MAKAANMIKVEQIGSPIRRHHSQRETLIGLKLNKIGRVAELQDTPEVRGMIGKVQHLVRVVDEK</sequence>
<protein>
    <recommendedName>
        <fullName evidence="1">Large ribosomal subunit protein uL30</fullName>
    </recommendedName>
    <alternativeName>
        <fullName evidence="2">50S ribosomal protein L30</fullName>
    </alternativeName>
</protein>
<keyword id="KW-0687">Ribonucleoprotein</keyword>
<keyword id="KW-0689">Ribosomal protein</keyword>
<reference key="1">
    <citation type="submission" date="2008-05" db="EMBL/GenBank/DDBJ databases">
        <title>Complete sequence of Rhodopseudomonas palustris TIE-1.</title>
        <authorList>
            <consortium name="US DOE Joint Genome Institute"/>
            <person name="Lucas S."/>
            <person name="Copeland A."/>
            <person name="Lapidus A."/>
            <person name="Glavina del Rio T."/>
            <person name="Dalin E."/>
            <person name="Tice H."/>
            <person name="Pitluck S."/>
            <person name="Chain P."/>
            <person name="Malfatti S."/>
            <person name="Shin M."/>
            <person name="Vergez L."/>
            <person name="Lang D."/>
            <person name="Schmutz J."/>
            <person name="Larimer F."/>
            <person name="Land M."/>
            <person name="Hauser L."/>
            <person name="Kyrpides N."/>
            <person name="Mikhailova N."/>
            <person name="Emerson D."/>
            <person name="Newman D.K."/>
            <person name="Roden E."/>
            <person name="Richardson P."/>
        </authorList>
    </citation>
    <scope>NUCLEOTIDE SEQUENCE [LARGE SCALE GENOMIC DNA]</scope>
    <source>
        <strain>TIE-1</strain>
    </source>
</reference>
<dbReference type="EMBL" id="CP001096">
    <property type="protein sequence ID" value="ACF02149.1"/>
    <property type="molecule type" value="Genomic_DNA"/>
</dbReference>
<dbReference type="RefSeq" id="WP_011158777.1">
    <property type="nucleotide sequence ID" value="NC_011004.1"/>
</dbReference>
<dbReference type="SMR" id="B3QBW2"/>
<dbReference type="GeneID" id="66894318"/>
<dbReference type="KEGG" id="rpt:Rpal_3649"/>
<dbReference type="HOGENOM" id="CLU_131047_1_2_5"/>
<dbReference type="OrthoDB" id="9812790at2"/>
<dbReference type="Proteomes" id="UP000001725">
    <property type="component" value="Chromosome"/>
</dbReference>
<dbReference type="GO" id="GO:0022625">
    <property type="term" value="C:cytosolic large ribosomal subunit"/>
    <property type="evidence" value="ECO:0007669"/>
    <property type="project" value="TreeGrafter"/>
</dbReference>
<dbReference type="GO" id="GO:0003735">
    <property type="term" value="F:structural constituent of ribosome"/>
    <property type="evidence" value="ECO:0007669"/>
    <property type="project" value="InterPro"/>
</dbReference>
<dbReference type="GO" id="GO:0006412">
    <property type="term" value="P:translation"/>
    <property type="evidence" value="ECO:0007669"/>
    <property type="project" value="UniProtKB-UniRule"/>
</dbReference>
<dbReference type="CDD" id="cd01658">
    <property type="entry name" value="Ribosomal_L30"/>
    <property type="match status" value="1"/>
</dbReference>
<dbReference type="Gene3D" id="3.30.1390.20">
    <property type="entry name" value="Ribosomal protein L30, ferredoxin-like fold domain"/>
    <property type="match status" value="1"/>
</dbReference>
<dbReference type="HAMAP" id="MF_01371_B">
    <property type="entry name" value="Ribosomal_uL30_B"/>
    <property type="match status" value="1"/>
</dbReference>
<dbReference type="InterPro" id="IPR036919">
    <property type="entry name" value="Ribo_uL30_ferredoxin-like_sf"/>
</dbReference>
<dbReference type="InterPro" id="IPR005996">
    <property type="entry name" value="Ribosomal_uL30_bac-type"/>
</dbReference>
<dbReference type="InterPro" id="IPR016082">
    <property type="entry name" value="Ribosomal_uL30_ferredoxin-like"/>
</dbReference>
<dbReference type="NCBIfam" id="TIGR01308">
    <property type="entry name" value="rpmD_bact"/>
    <property type="match status" value="1"/>
</dbReference>
<dbReference type="PANTHER" id="PTHR15892:SF2">
    <property type="entry name" value="LARGE RIBOSOMAL SUBUNIT PROTEIN UL30M"/>
    <property type="match status" value="1"/>
</dbReference>
<dbReference type="PANTHER" id="PTHR15892">
    <property type="entry name" value="MITOCHONDRIAL RIBOSOMAL PROTEIN L30"/>
    <property type="match status" value="1"/>
</dbReference>
<dbReference type="Pfam" id="PF00327">
    <property type="entry name" value="Ribosomal_L30"/>
    <property type="match status" value="1"/>
</dbReference>
<dbReference type="PIRSF" id="PIRSF002211">
    <property type="entry name" value="Ribosomal_L30_bac-type"/>
    <property type="match status" value="1"/>
</dbReference>
<dbReference type="SUPFAM" id="SSF55129">
    <property type="entry name" value="Ribosomal protein L30p/L7e"/>
    <property type="match status" value="1"/>
</dbReference>